<reference key="1">
    <citation type="journal article" date="2005" name="Nature">
        <title>The genome of the social amoeba Dictyostelium discoideum.</title>
        <authorList>
            <person name="Eichinger L."/>
            <person name="Pachebat J.A."/>
            <person name="Gloeckner G."/>
            <person name="Rajandream M.A."/>
            <person name="Sucgang R."/>
            <person name="Berriman M."/>
            <person name="Song J."/>
            <person name="Olsen R."/>
            <person name="Szafranski K."/>
            <person name="Xu Q."/>
            <person name="Tunggal B."/>
            <person name="Kummerfeld S."/>
            <person name="Madera M."/>
            <person name="Konfortov B.A."/>
            <person name="Rivero F."/>
            <person name="Bankier A.T."/>
            <person name="Lehmann R."/>
            <person name="Hamlin N."/>
            <person name="Davies R."/>
            <person name="Gaudet P."/>
            <person name="Fey P."/>
            <person name="Pilcher K."/>
            <person name="Chen G."/>
            <person name="Saunders D."/>
            <person name="Sodergren E.J."/>
            <person name="Davis P."/>
            <person name="Kerhornou A."/>
            <person name="Nie X."/>
            <person name="Hall N."/>
            <person name="Anjard C."/>
            <person name="Hemphill L."/>
            <person name="Bason N."/>
            <person name="Farbrother P."/>
            <person name="Desany B."/>
            <person name="Just E."/>
            <person name="Morio T."/>
            <person name="Rost R."/>
            <person name="Churcher C.M."/>
            <person name="Cooper J."/>
            <person name="Haydock S."/>
            <person name="van Driessche N."/>
            <person name="Cronin A."/>
            <person name="Goodhead I."/>
            <person name="Muzny D.M."/>
            <person name="Mourier T."/>
            <person name="Pain A."/>
            <person name="Lu M."/>
            <person name="Harper D."/>
            <person name="Lindsay R."/>
            <person name="Hauser H."/>
            <person name="James K.D."/>
            <person name="Quiles M."/>
            <person name="Madan Babu M."/>
            <person name="Saito T."/>
            <person name="Buchrieser C."/>
            <person name="Wardroper A."/>
            <person name="Felder M."/>
            <person name="Thangavelu M."/>
            <person name="Johnson D."/>
            <person name="Knights A."/>
            <person name="Loulseged H."/>
            <person name="Mungall K.L."/>
            <person name="Oliver K."/>
            <person name="Price C."/>
            <person name="Quail M.A."/>
            <person name="Urushihara H."/>
            <person name="Hernandez J."/>
            <person name="Rabbinowitsch E."/>
            <person name="Steffen D."/>
            <person name="Sanders M."/>
            <person name="Ma J."/>
            <person name="Kohara Y."/>
            <person name="Sharp S."/>
            <person name="Simmonds M.N."/>
            <person name="Spiegler S."/>
            <person name="Tivey A."/>
            <person name="Sugano S."/>
            <person name="White B."/>
            <person name="Walker D."/>
            <person name="Woodward J.R."/>
            <person name="Winckler T."/>
            <person name="Tanaka Y."/>
            <person name="Shaulsky G."/>
            <person name="Schleicher M."/>
            <person name="Weinstock G.M."/>
            <person name="Rosenthal A."/>
            <person name="Cox E.C."/>
            <person name="Chisholm R.L."/>
            <person name="Gibbs R.A."/>
            <person name="Loomis W.F."/>
            <person name="Platzer M."/>
            <person name="Kay R.R."/>
            <person name="Williams J.G."/>
            <person name="Dear P.H."/>
            <person name="Noegel A.A."/>
            <person name="Barrell B.G."/>
            <person name="Kuspa A."/>
        </authorList>
    </citation>
    <scope>NUCLEOTIDE SEQUENCE [LARGE SCALE GENOMIC DNA]</scope>
    <source>
        <strain>AX4</strain>
    </source>
</reference>
<feature type="chain" id="PRO_0000351230" description="Uncharacterized transmembrane protein DDB_G0282483">
    <location>
        <begin position="1"/>
        <end position="375"/>
    </location>
</feature>
<feature type="transmembrane region" description="Helical" evidence="1">
    <location>
        <begin position="299"/>
        <end position="319"/>
    </location>
</feature>
<feature type="transmembrane region" description="Helical" evidence="1">
    <location>
        <begin position="327"/>
        <end position="347"/>
    </location>
</feature>
<feature type="region of interest" description="Disordered" evidence="2">
    <location>
        <begin position="1"/>
        <end position="76"/>
    </location>
</feature>
<feature type="region of interest" description="Disordered" evidence="2">
    <location>
        <begin position="119"/>
        <end position="274"/>
    </location>
</feature>
<feature type="region of interest" description="Disordered" evidence="2">
    <location>
        <begin position="355"/>
        <end position="375"/>
    </location>
</feature>
<feature type="compositionally biased region" description="Basic residues" evidence="2">
    <location>
        <begin position="1"/>
        <end position="12"/>
    </location>
</feature>
<feature type="compositionally biased region" description="Polar residues" evidence="2">
    <location>
        <begin position="26"/>
        <end position="39"/>
    </location>
</feature>
<feature type="compositionally biased region" description="Low complexity" evidence="2">
    <location>
        <begin position="129"/>
        <end position="141"/>
    </location>
</feature>
<feature type="compositionally biased region" description="Basic and acidic residues" evidence="2">
    <location>
        <begin position="175"/>
        <end position="185"/>
    </location>
</feature>
<feature type="compositionally biased region" description="Low complexity" evidence="2">
    <location>
        <begin position="198"/>
        <end position="212"/>
    </location>
</feature>
<feature type="compositionally biased region" description="Low complexity" evidence="2">
    <location>
        <begin position="225"/>
        <end position="241"/>
    </location>
</feature>
<feature type="compositionally biased region" description="Basic and acidic residues" evidence="2">
    <location>
        <begin position="256"/>
        <end position="274"/>
    </location>
</feature>
<feature type="compositionally biased region" description="Basic residues" evidence="2">
    <location>
        <begin position="363"/>
        <end position="375"/>
    </location>
</feature>
<keyword id="KW-0472">Membrane</keyword>
<keyword id="KW-1185">Reference proteome</keyword>
<keyword id="KW-0812">Transmembrane</keyword>
<keyword id="KW-1133">Transmembrane helix</keyword>
<evidence type="ECO:0000255" key="1"/>
<evidence type="ECO:0000256" key="2">
    <source>
        <dbReference type="SAM" id="MobiDB-lite"/>
    </source>
</evidence>
<evidence type="ECO:0000305" key="3"/>
<gene>
    <name type="ORF">DDB_G0282483</name>
</gene>
<dbReference type="EMBL" id="AAFI02000047">
    <property type="protein sequence ID" value="EAL66101.1"/>
    <property type="molecule type" value="Genomic_DNA"/>
</dbReference>
<dbReference type="RefSeq" id="XP_640076.1">
    <property type="nucleotide sequence ID" value="XM_634984.1"/>
</dbReference>
<dbReference type="SMR" id="Q54SG3"/>
<dbReference type="FunCoup" id="Q54SG3">
    <property type="interactions" value="877"/>
</dbReference>
<dbReference type="GlyGen" id="Q54SG3">
    <property type="glycosylation" value="10 sites"/>
</dbReference>
<dbReference type="PaxDb" id="44689-DDB0204788"/>
<dbReference type="EnsemblProtists" id="EAL66101">
    <property type="protein sequence ID" value="EAL66101"/>
    <property type="gene ID" value="DDB_G0282483"/>
</dbReference>
<dbReference type="GeneID" id="8623605"/>
<dbReference type="KEGG" id="ddi:DDB_G0282483"/>
<dbReference type="dictyBase" id="DDB_G0282483"/>
<dbReference type="VEuPathDB" id="AmoebaDB:DDB_G0282483"/>
<dbReference type="eggNOG" id="ENOG502RE1Q">
    <property type="taxonomic scope" value="Eukaryota"/>
</dbReference>
<dbReference type="HOGENOM" id="CLU_738574_0_0_1"/>
<dbReference type="InParanoid" id="Q54SG3"/>
<dbReference type="OMA" id="AFEINDQ"/>
<dbReference type="PRO" id="PR:Q54SG3"/>
<dbReference type="Proteomes" id="UP000002195">
    <property type="component" value="Chromosome 3"/>
</dbReference>
<dbReference type="GO" id="GO:0005789">
    <property type="term" value="C:endoplasmic reticulum membrane"/>
    <property type="evidence" value="ECO:0000318"/>
    <property type="project" value="GO_Central"/>
</dbReference>
<dbReference type="GO" id="GO:0070072">
    <property type="term" value="P:vacuolar proton-transporting V-type ATPase complex assembly"/>
    <property type="evidence" value="ECO:0000318"/>
    <property type="project" value="GO_Central"/>
</dbReference>
<dbReference type="InterPro" id="IPR013945">
    <property type="entry name" value="Pkr1"/>
</dbReference>
<dbReference type="PANTHER" id="PTHR28251">
    <property type="entry name" value="V-TYPE ATPASE ASSEMBLY FACTOR PKR1"/>
    <property type="match status" value="1"/>
</dbReference>
<dbReference type="PANTHER" id="PTHR28251:SF1">
    <property type="entry name" value="V-TYPE ATPASE ASSEMBLY FACTOR PKR1"/>
    <property type="match status" value="1"/>
</dbReference>
<dbReference type="PRINTS" id="PR01217">
    <property type="entry name" value="PRICHEXTENSN"/>
</dbReference>
<accession>Q54SG3</accession>
<comment type="subcellular location">
    <subcellularLocation>
        <location evidence="3">Membrane</location>
        <topology evidence="3">Multi-pass membrane protein</topology>
    </subcellularLocation>
</comment>
<organism>
    <name type="scientific">Dictyostelium discoideum</name>
    <name type="common">Social amoeba</name>
    <dbReference type="NCBI Taxonomy" id="44689"/>
    <lineage>
        <taxon>Eukaryota</taxon>
        <taxon>Amoebozoa</taxon>
        <taxon>Evosea</taxon>
        <taxon>Eumycetozoa</taxon>
        <taxon>Dictyostelia</taxon>
        <taxon>Dictyosteliales</taxon>
        <taxon>Dictyosteliaceae</taxon>
        <taxon>Dictyostelium</taxon>
    </lineage>
</organism>
<proteinExistence type="predicted"/>
<sequence length="375" mass="40387">MAGNKKQVKKNTKPIVVDIDDKPLLDTSNLDTAVQTSASTKKDGKKVTATTTTTTPTPTPTPTPTPTTTTTTEKKSKEIEIVPTPSNVPASISASTSNVVIAPAVEAQITDDFSVVPEKNKNKKKINSTATDGTTTTTNIPKPTPVRAPITKKGNTAPRSQFHLLALDEDDITFDETHSHKEEPKQPQQQHSTKKSSSKQQATQNVSSSSSSKKSKSKETKKVEPTPTTTTQRTTTTKSTPTPTPTPTPAATKVVEQPKEKSSPAPVKKEKEIKQNKKESEGFLFSLMESLITPGVPSVVYKIIYVALIGVLLFSLVPLYYSGLDSIYSYGVIALVLGLGISLTLFISEIPRLQASKEQKSKSGNKKSTTRKVKA</sequence>
<name>Y4788_DICDI</name>
<protein>
    <recommendedName>
        <fullName>Uncharacterized transmembrane protein DDB_G0282483</fullName>
    </recommendedName>
</protein>